<organism>
    <name type="scientific">Danio rerio</name>
    <name type="common">Zebrafish</name>
    <name type="synonym">Brachydanio rerio</name>
    <dbReference type="NCBI Taxonomy" id="7955"/>
    <lineage>
        <taxon>Eukaryota</taxon>
        <taxon>Metazoa</taxon>
        <taxon>Chordata</taxon>
        <taxon>Craniata</taxon>
        <taxon>Vertebrata</taxon>
        <taxon>Euteleostomi</taxon>
        <taxon>Actinopterygii</taxon>
        <taxon>Neopterygii</taxon>
        <taxon>Teleostei</taxon>
        <taxon>Ostariophysi</taxon>
        <taxon>Cypriniformes</taxon>
        <taxon>Danionidae</taxon>
        <taxon>Danioninae</taxon>
        <taxon>Danio</taxon>
    </lineage>
</organism>
<accession>Q5TYS5</accession>
<proteinExistence type="evidence at transcript level"/>
<protein>
    <recommendedName>
        <fullName>Secernin-2</fullName>
    </recommendedName>
</protein>
<feature type="chain" id="PRO_0000262555" description="Secernin-2">
    <location>
        <begin position="1"/>
        <end position="415"/>
    </location>
</feature>
<feature type="active site" evidence="1">
    <location>
        <position position="8"/>
    </location>
</feature>
<evidence type="ECO:0000255" key="1"/>
<evidence type="ECO:0000305" key="2"/>
<name>SCRN2_DANRE</name>
<keyword id="KW-1185">Reference proteome</keyword>
<reference key="1">
    <citation type="journal article" date="2013" name="Nature">
        <title>The zebrafish reference genome sequence and its relationship to the human genome.</title>
        <authorList>
            <person name="Howe K."/>
            <person name="Clark M.D."/>
            <person name="Torroja C.F."/>
            <person name="Torrance J."/>
            <person name="Berthelot C."/>
            <person name="Muffato M."/>
            <person name="Collins J.E."/>
            <person name="Humphray S."/>
            <person name="McLaren K."/>
            <person name="Matthews L."/>
            <person name="McLaren S."/>
            <person name="Sealy I."/>
            <person name="Caccamo M."/>
            <person name="Churcher C."/>
            <person name="Scott C."/>
            <person name="Barrett J.C."/>
            <person name="Koch R."/>
            <person name="Rauch G.J."/>
            <person name="White S."/>
            <person name="Chow W."/>
            <person name="Kilian B."/>
            <person name="Quintais L.T."/>
            <person name="Guerra-Assuncao J.A."/>
            <person name="Zhou Y."/>
            <person name="Gu Y."/>
            <person name="Yen J."/>
            <person name="Vogel J.H."/>
            <person name="Eyre T."/>
            <person name="Redmond S."/>
            <person name="Banerjee R."/>
            <person name="Chi J."/>
            <person name="Fu B."/>
            <person name="Langley E."/>
            <person name="Maguire S.F."/>
            <person name="Laird G.K."/>
            <person name="Lloyd D."/>
            <person name="Kenyon E."/>
            <person name="Donaldson S."/>
            <person name="Sehra H."/>
            <person name="Almeida-King J."/>
            <person name="Loveland J."/>
            <person name="Trevanion S."/>
            <person name="Jones M."/>
            <person name="Quail M."/>
            <person name="Willey D."/>
            <person name="Hunt A."/>
            <person name="Burton J."/>
            <person name="Sims S."/>
            <person name="McLay K."/>
            <person name="Plumb B."/>
            <person name="Davis J."/>
            <person name="Clee C."/>
            <person name="Oliver K."/>
            <person name="Clark R."/>
            <person name="Riddle C."/>
            <person name="Elliot D."/>
            <person name="Threadgold G."/>
            <person name="Harden G."/>
            <person name="Ware D."/>
            <person name="Begum S."/>
            <person name="Mortimore B."/>
            <person name="Kerry G."/>
            <person name="Heath P."/>
            <person name="Phillimore B."/>
            <person name="Tracey A."/>
            <person name="Corby N."/>
            <person name="Dunn M."/>
            <person name="Johnson C."/>
            <person name="Wood J."/>
            <person name="Clark S."/>
            <person name="Pelan S."/>
            <person name="Griffiths G."/>
            <person name="Smith M."/>
            <person name="Glithero R."/>
            <person name="Howden P."/>
            <person name="Barker N."/>
            <person name="Lloyd C."/>
            <person name="Stevens C."/>
            <person name="Harley J."/>
            <person name="Holt K."/>
            <person name="Panagiotidis G."/>
            <person name="Lovell J."/>
            <person name="Beasley H."/>
            <person name="Henderson C."/>
            <person name="Gordon D."/>
            <person name="Auger K."/>
            <person name="Wright D."/>
            <person name="Collins J."/>
            <person name="Raisen C."/>
            <person name="Dyer L."/>
            <person name="Leung K."/>
            <person name="Robertson L."/>
            <person name="Ambridge K."/>
            <person name="Leongamornlert D."/>
            <person name="McGuire S."/>
            <person name="Gilderthorp R."/>
            <person name="Griffiths C."/>
            <person name="Manthravadi D."/>
            <person name="Nichol S."/>
            <person name="Barker G."/>
            <person name="Whitehead S."/>
            <person name="Kay M."/>
            <person name="Brown J."/>
            <person name="Murnane C."/>
            <person name="Gray E."/>
            <person name="Humphries M."/>
            <person name="Sycamore N."/>
            <person name="Barker D."/>
            <person name="Saunders D."/>
            <person name="Wallis J."/>
            <person name="Babbage A."/>
            <person name="Hammond S."/>
            <person name="Mashreghi-Mohammadi M."/>
            <person name="Barr L."/>
            <person name="Martin S."/>
            <person name="Wray P."/>
            <person name="Ellington A."/>
            <person name="Matthews N."/>
            <person name="Ellwood M."/>
            <person name="Woodmansey R."/>
            <person name="Clark G."/>
            <person name="Cooper J."/>
            <person name="Tromans A."/>
            <person name="Grafham D."/>
            <person name="Skuce C."/>
            <person name="Pandian R."/>
            <person name="Andrews R."/>
            <person name="Harrison E."/>
            <person name="Kimberley A."/>
            <person name="Garnett J."/>
            <person name="Fosker N."/>
            <person name="Hall R."/>
            <person name="Garner P."/>
            <person name="Kelly D."/>
            <person name="Bird C."/>
            <person name="Palmer S."/>
            <person name="Gehring I."/>
            <person name="Berger A."/>
            <person name="Dooley C.M."/>
            <person name="Ersan-Urun Z."/>
            <person name="Eser C."/>
            <person name="Geiger H."/>
            <person name="Geisler M."/>
            <person name="Karotki L."/>
            <person name="Kirn A."/>
            <person name="Konantz J."/>
            <person name="Konantz M."/>
            <person name="Oberlander M."/>
            <person name="Rudolph-Geiger S."/>
            <person name="Teucke M."/>
            <person name="Lanz C."/>
            <person name="Raddatz G."/>
            <person name="Osoegawa K."/>
            <person name="Zhu B."/>
            <person name="Rapp A."/>
            <person name="Widaa S."/>
            <person name="Langford C."/>
            <person name="Yang F."/>
            <person name="Schuster S.C."/>
            <person name="Carter N.P."/>
            <person name="Harrow J."/>
            <person name="Ning Z."/>
            <person name="Herrero J."/>
            <person name="Searle S.M."/>
            <person name="Enright A."/>
            <person name="Geisler R."/>
            <person name="Plasterk R.H."/>
            <person name="Lee C."/>
            <person name="Westerfield M."/>
            <person name="de Jong P.J."/>
            <person name="Zon L.I."/>
            <person name="Postlethwait J.H."/>
            <person name="Nusslein-Volhard C."/>
            <person name="Hubbard T.J."/>
            <person name="Roest Crollius H."/>
            <person name="Rogers J."/>
            <person name="Stemple D.L."/>
        </authorList>
    </citation>
    <scope>NUCLEOTIDE SEQUENCE [LARGE SCALE GENOMIC DNA]</scope>
    <source>
        <strain>Tuebingen</strain>
    </source>
</reference>
<reference key="2">
    <citation type="submission" date="2006-10" db="EMBL/GenBank/DDBJ databases">
        <authorList>
            <consortium name="NIH - Zebrafish Gene Collection (ZGC) project"/>
        </authorList>
    </citation>
    <scope>NUCLEOTIDE SEQUENCE [LARGE SCALE MRNA]</scope>
</reference>
<gene>
    <name type="primary">scrn2</name>
    <name type="ORF">si:ch211-184m19.2</name>
</gene>
<comment type="similarity">
    <text evidence="2">Belongs to the peptidase C69 family. Secernin subfamily.</text>
</comment>
<sequence length="415" mass="46041">MAEPPRSCDCFVSLPPGSKEDYVIFGKNSDRPRDEVQEVVYFPASSHPPASTVECTYISIPQVEHTNAVVLSRPAWLWGAEMGANEHGVCVGNEAVWTKEPVNPEEALLGMDLVRLGLERGDSARAALNVITALLEQFGQGGACRETSEPFSYHNTFLLVDRQEAWVLETAGKLWAAQKVTEGVKNISNQLTIDFEISAEHPDLRSVAQAQGWWSGEGDFSFTAVFSPDHPPARMEMAKQRYRGGTALLQQHNGSVTAEVMMSILRDKASGICMDSEGFRTTGSMVSILPRNPNMPCVHFLTATPDPSRSVFKPFIFSESVRPVSMVMSPQYGPGDPVRTLPRFQHQVDRKHELYKAHQMANTSSDAGVSLQDTMRYLESQCLEEIEAMLRGEVQGQELGDLFFDCVDAEIKFYQ</sequence>
<dbReference type="EMBL" id="BX901920">
    <property type="protein sequence ID" value="CAH68895.1"/>
    <property type="molecule type" value="Genomic_DNA"/>
</dbReference>
<dbReference type="EMBL" id="BC124746">
    <property type="protein sequence ID" value="AAI24747.1"/>
    <property type="molecule type" value="mRNA"/>
</dbReference>
<dbReference type="RefSeq" id="NP_001025287.1">
    <property type="nucleotide sequence ID" value="NM_001030116.1"/>
</dbReference>
<dbReference type="RefSeq" id="XP_005160490.1">
    <property type="nucleotide sequence ID" value="XM_005160433.2"/>
</dbReference>
<dbReference type="RefSeq" id="XP_005160491.1">
    <property type="nucleotide sequence ID" value="XM_005160434.2"/>
</dbReference>
<dbReference type="SMR" id="Q5TYS5"/>
<dbReference type="FunCoup" id="Q5TYS5">
    <property type="interactions" value="374"/>
</dbReference>
<dbReference type="STRING" id="7955.ENSDARP00000063856"/>
<dbReference type="PaxDb" id="7955-ENSDARP00000063856"/>
<dbReference type="Ensembl" id="ENSDART00000063857">
    <property type="protein sequence ID" value="ENSDARP00000063856"/>
    <property type="gene ID" value="ENSDARG00000043497"/>
</dbReference>
<dbReference type="Ensembl" id="ENSDART00000161314">
    <property type="protein sequence ID" value="ENSDARP00000131124"/>
    <property type="gene ID" value="ENSDARG00000043497"/>
</dbReference>
<dbReference type="GeneID" id="558306"/>
<dbReference type="KEGG" id="dre:558306"/>
<dbReference type="AGR" id="ZFIN:ZDB-GENE-040724-75"/>
<dbReference type="CTD" id="90507"/>
<dbReference type="ZFIN" id="ZDB-GENE-040724-75">
    <property type="gene designation" value="scrn2"/>
</dbReference>
<dbReference type="eggNOG" id="ENOG502QPIA">
    <property type="taxonomic scope" value="Eukaryota"/>
</dbReference>
<dbReference type="InParanoid" id="Q5TYS5"/>
<dbReference type="OMA" id="QAQGWWG"/>
<dbReference type="OrthoDB" id="5175656at2759"/>
<dbReference type="PhylomeDB" id="Q5TYS5"/>
<dbReference type="TreeFam" id="TF323890"/>
<dbReference type="PRO" id="PR:Q5TYS5"/>
<dbReference type="Proteomes" id="UP000000437">
    <property type="component" value="Chromosome 20"/>
</dbReference>
<dbReference type="Bgee" id="ENSDARG00000043497">
    <property type="expression patterns" value="Expressed in bone element and 24 other cell types or tissues"/>
</dbReference>
<dbReference type="ExpressionAtlas" id="Q5TYS5">
    <property type="expression patterns" value="baseline and differential"/>
</dbReference>
<dbReference type="GO" id="GO:0070004">
    <property type="term" value="F:cysteine-type exopeptidase activity"/>
    <property type="evidence" value="ECO:0007669"/>
    <property type="project" value="InterPro"/>
</dbReference>
<dbReference type="GO" id="GO:0016805">
    <property type="term" value="F:dipeptidase activity"/>
    <property type="evidence" value="ECO:0007669"/>
    <property type="project" value="InterPro"/>
</dbReference>
<dbReference type="GO" id="GO:0006508">
    <property type="term" value="P:proteolysis"/>
    <property type="evidence" value="ECO:0007669"/>
    <property type="project" value="InterPro"/>
</dbReference>
<dbReference type="FunFam" id="3.60.60.10:FF:000001">
    <property type="entry name" value="Secernin 1"/>
    <property type="match status" value="1"/>
</dbReference>
<dbReference type="Gene3D" id="3.60.60.10">
    <property type="entry name" value="Penicillin V Acylase, Chain A"/>
    <property type="match status" value="1"/>
</dbReference>
<dbReference type="InterPro" id="IPR005322">
    <property type="entry name" value="Peptidase_C69"/>
</dbReference>
<dbReference type="PANTHER" id="PTHR12994">
    <property type="entry name" value="SECERNIN"/>
    <property type="match status" value="1"/>
</dbReference>
<dbReference type="PANTHER" id="PTHR12994:SF16">
    <property type="entry name" value="SECERNIN-2"/>
    <property type="match status" value="1"/>
</dbReference>
<dbReference type="Pfam" id="PF03577">
    <property type="entry name" value="Peptidase_C69"/>
    <property type="match status" value="1"/>
</dbReference>